<name>ETFA_CLOPA</name>
<comment type="function">
    <text evidence="1">The electron transfer flavoprotein serves as a specific electron acceptor for other dehydrogenases. It transfers the electrons to the main respiratory chain via ETF-ubiquinone oxidoreductase (ETF dehydrogenase) (By similarity).</text>
</comment>
<comment type="cofactor">
    <cofactor evidence="1">
        <name>FAD</name>
        <dbReference type="ChEBI" id="CHEBI:57692"/>
    </cofactor>
    <text evidence="1">Binds 1 FAD per dimer.</text>
</comment>
<comment type="subunit">
    <text>Heterodimer of an alpha and a beta subunit.</text>
</comment>
<comment type="similarity">
    <text evidence="2">Belongs to the ETF alpha-subunit/FixB family.</text>
</comment>
<keyword id="KW-0903">Direct protein sequencing</keyword>
<keyword id="KW-0249">Electron transport</keyword>
<keyword id="KW-0274">FAD</keyword>
<keyword id="KW-0285">Flavoprotein</keyword>
<keyword id="KW-0813">Transport</keyword>
<gene>
    <name type="primary">etfA</name>
</gene>
<sequence>MNIADYKGGVWVFAEQXDG</sequence>
<reference key="1">
    <citation type="journal article" date="1998" name="Electrophoresis">
        <title>Two-dimensional gel electrophoresis separation and N-terminal sequence analysis of proteins from Clostridium pasteurianum W5.</title>
        <authorList>
            <person name="Flengsrud R."/>
            <person name="Skjeldal L."/>
        </authorList>
    </citation>
    <scope>PROTEIN SEQUENCE</scope>
    <source>
        <strain>ATCC 6013 / DSM 525 / NCIB 9486 / VKM B-1774 / W5</strain>
    </source>
</reference>
<feature type="chain" id="PRO_0000167848" description="Electron transfer flavoprotein subunit alpha">
    <location>
        <begin position="1"/>
        <end position="19" status="greater than"/>
    </location>
</feature>
<feature type="non-terminal residue">
    <location>
        <position position="19"/>
    </location>
</feature>
<evidence type="ECO:0000250" key="1"/>
<evidence type="ECO:0000305" key="2"/>
<protein>
    <recommendedName>
        <fullName>Electron transfer flavoprotein subunit alpha</fullName>
        <shortName>Alpha-ETF</shortName>
    </recommendedName>
    <alternativeName>
        <fullName>CP 14</fullName>
    </alternativeName>
    <alternativeName>
        <fullName>Electron transfer flavoprotein large subunit</fullName>
        <shortName>ETFLS</shortName>
    </alternativeName>
</protein>
<proteinExistence type="evidence at protein level"/>
<organism>
    <name type="scientific">Clostridium pasteurianum</name>
    <dbReference type="NCBI Taxonomy" id="1501"/>
    <lineage>
        <taxon>Bacteria</taxon>
        <taxon>Bacillati</taxon>
        <taxon>Bacillota</taxon>
        <taxon>Clostridia</taxon>
        <taxon>Eubacteriales</taxon>
        <taxon>Clostridiaceae</taxon>
        <taxon>Clostridium</taxon>
    </lineage>
</organism>
<accession>P81342</accession>